<sequence length="141" mass="15455">MKENDVVLRTVTKLVVFILLTFGFYVFFAGHNNPGGGFIGGLIFSSAFILMFLAFNVEEVLESLPIDFRILMIIGALVSSITAIIPMFFGKPFLSQYETTWILPILGQIHVSTITLFELGILFSVVGVIVTVMLSLSGGRS</sequence>
<comment type="subunit">
    <text evidence="1">May form a heterooligomeric complex that consists of seven subunits: mnhA2, mnhB2, mnhC2, mnhD2, mnhE2, mnhF2 and mnhG2.</text>
</comment>
<comment type="subcellular location">
    <subcellularLocation>
        <location evidence="3">Cell membrane</location>
        <topology evidence="3">Multi-pass membrane protein</topology>
    </subcellularLocation>
</comment>
<comment type="similarity">
    <text evidence="3">Belongs to the CPA3 antiporters (TC 2.A.63) subunit B family.</text>
</comment>
<feature type="chain" id="PRO_0000372279" description="Putative antiporter subunit mnhB2">
    <location>
        <begin position="1"/>
        <end position="141"/>
    </location>
</feature>
<feature type="transmembrane region" description="Helical" evidence="2">
    <location>
        <begin position="10"/>
        <end position="30"/>
    </location>
</feature>
<feature type="transmembrane region" description="Helical" evidence="2">
    <location>
        <begin position="35"/>
        <end position="55"/>
    </location>
</feature>
<feature type="transmembrane region" description="Helical" evidence="2">
    <location>
        <begin position="70"/>
        <end position="90"/>
    </location>
</feature>
<feature type="transmembrane region" description="Helical" evidence="2">
    <location>
        <begin position="114"/>
        <end position="134"/>
    </location>
</feature>
<accession>A8Z145</accession>
<keyword id="KW-0050">Antiport</keyword>
<keyword id="KW-1003">Cell membrane</keyword>
<keyword id="KW-0406">Ion transport</keyword>
<keyword id="KW-0472">Membrane</keyword>
<keyword id="KW-0812">Transmembrane</keyword>
<keyword id="KW-1133">Transmembrane helix</keyword>
<keyword id="KW-0813">Transport</keyword>
<protein>
    <recommendedName>
        <fullName>Putative antiporter subunit mnhB2</fullName>
    </recommendedName>
    <alternativeName>
        <fullName>Mrp complex subunit B2</fullName>
    </alternativeName>
    <alternativeName>
        <fullName>Putative NADH-ubiquinone oxidoreductase subunit mnhB2</fullName>
    </alternativeName>
</protein>
<gene>
    <name type="primary">mnhB2</name>
    <name type="synonym">mrpB2</name>
    <name type="ordered locus">USA300HOU_0644</name>
</gene>
<evidence type="ECO:0000250" key="1"/>
<evidence type="ECO:0000255" key="2"/>
<evidence type="ECO:0000305" key="3"/>
<dbReference type="EMBL" id="CP000730">
    <property type="protein sequence ID" value="ABX28666.1"/>
    <property type="molecule type" value="Genomic_DNA"/>
</dbReference>
<dbReference type="RefSeq" id="WP_000661906.1">
    <property type="nucleotide sequence ID" value="NC_010079.1"/>
</dbReference>
<dbReference type="SMR" id="A8Z145"/>
<dbReference type="KEGG" id="sax:USA300HOU_0644"/>
<dbReference type="HOGENOM" id="CLU_101659_1_1_9"/>
<dbReference type="GO" id="GO:0005886">
    <property type="term" value="C:plasma membrane"/>
    <property type="evidence" value="ECO:0007669"/>
    <property type="project" value="UniProtKB-SubCell"/>
</dbReference>
<dbReference type="GO" id="GO:0015297">
    <property type="term" value="F:antiporter activity"/>
    <property type="evidence" value="ECO:0007669"/>
    <property type="project" value="UniProtKB-KW"/>
</dbReference>
<dbReference type="GO" id="GO:0006811">
    <property type="term" value="P:monoatomic ion transport"/>
    <property type="evidence" value="ECO:0007669"/>
    <property type="project" value="UniProtKB-KW"/>
</dbReference>
<dbReference type="InterPro" id="IPR050622">
    <property type="entry name" value="CPA3_antiporter_subunitB"/>
</dbReference>
<dbReference type="InterPro" id="IPR007182">
    <property type="entry name" value="MnhB"/>
</dbReference>
<dbReference type="NCBIfam" id="NF009223">
    <property type="entry name" value="PRK12573.1"/>
    <property type="match status" value="1"/>
</dbReference>
<dbReference type="NCBIfam" id="NF009224">
    <property type="entry name" value="PRK12574.1"/>
    <property type="match status" value="1"/>
</dbReference>
<dbReference type="PANTHER" id="PTHR33932">
    <property type="entry name" value="NA(+)/H(+) ANTIPORTER SUBUNIT B"/>
    <property type="match status" value="1"/>
</dbReference>
<dbReference type="PANTHER" id="PTHR33932:SF4">
    <property type="entry name" value="NA(+)_H(+) ANTIPORTER SUBUNIT B"/>
    <property type="match status" value="1"/>
</dbReference>
<dbReference type="Pfam" id="PF04039">
    <property type="entry name" value="MnhB"/>
    <property type="match status" value="1"/>
</dbReference>
<name>MNHB2_STAAT</name>
<proteinExistence type="inferred from homology"/>
<organism>
    <name type="scientific">Staphylococcus aureus (strain USA300 / TCH1516)</name>
    <dbReference type="NCBI Taxonomy" id="451516"/>
    <lineage>
        <taxon>Bacteria</taxon>
        <taxon>Bacillati</taxon>
        <taxon>Bacillota</taxon>
        <taxon>Bacilli</taxon>
        <taxon>Bacillales</taxon>
        <taxon>Staphylococcaceae</taxon>
        <taxon>Staphylococcus</taxon>
    </lineage>
</organism>
<reference key="1">
    <citation type="journal article" date="2007" name="BMC Microbiol.">
        <title>Subtle genetic changes enhance virulence of methicillin resistant and sensitive Staphylococcus aureus.</title>
        <authorList>
            <person name="Highlander S.K."/>
            <person name="Hulten K.G."/>
            <person name="Qin X."/>
            <person name="Jiang H."/>
            <person name="Yerrapragada S."/>
            <person name="Mason E.O. Jr."/>
            <person name="Shang Y."/>
            <person name="Williams T.M."/>
            <person name="Fortunov R.M."/>
            <person name="Liu Y."/>
            <person name="Igboeli O."/>
            <person name="Petrosino J."/>
            <person name="Tirumalai M."/>
            <person name="Uzman A."/>
            <person name="Fox G.E."/>
            <person name="Cardenas A.M."/>
            <person name="Muzny D.M."/>
            <person name="Hemphill L."/>
            <person name="Ding Y."/>
            <person name="Dugan S."/>
            <person name="Blyth P.R."/>
            <person name="Buhay C.J."/>
            <person name="Dinh H.H."/>
            <person name="Hawes A.C."/>
            <person name="Holder M."/>
            <person name="Kovar C.L."/>
            <person name="Lee S.L."/>
            <person name="Liu W."/>
            <person name="Nazareth L.V."/>
            <person name="Wang Q."/>
            <person name="Zhou J."/>
            <person name="Kaplan S.L."/>
            <person name="Weinstock G.M."/>
        </authorList>
    </citation>
    <scope>NUCLEOTIDE SEQUENCE [LARGE SCALE GENOMIC DNA]</scope>
    <source>
        <strain>USA300 / TCH1516</strain>
    </source>
</reference>